<feature type="chain" id="PRO_0000405368" description="I-Kappa-B like protein N1">
    <location>
        <begin position="1"/>
        <end position="139"/>
    </location>
</feature>
<feature type="repeat" description="ANK 1">
    <location>
        <begin position="16"/>
        <end position="48"/>
    </location>
</feature>
<feature type="repeat" description="ANK 2">
    <location>
        <begin position="54"/>
        <end position="87"/>
    </location>
</feature>
<feature type="repeat" description="ANK 3">
    <location>
        <begin position="92"/>
        <end position="122"/>
    </location>
</feature>
<reference key="1">
    <citation type="journal article" date="2006" name="Virology">
        <title>Polydnavirus genomes reflect their dual roles as mutualists and pathogens.</title>
        <authorList>
            <person name="Webb B.A."/>
            <person name="Strand M.R."/>
            <person name="Dickey S.E."/>
            <person name="Beck M.H."/>
            <person name="Hilgarth R.S."/>
            <person name="Barney W.E."/>
            <person name="Kadash K."/>
            <person name="Kroemer J.A."/>
            <person name="Lindstrom K.G."/>
            <person name="Rattanadechakul W."/>
            <person name="Shelby K.S."/>
            <person name="Thoetkiattikul H."/>
            <person name="Turnbull M.W."/>
            <person name="Witherell R.A."/>
        </authorList>
    </citation>
    <scope>NUCLEOTIDE SEQUENCE [GENOMIC DNA]</scope>
</reference>
<organism>
    <name type="scientific">Microplitis demolitor bracovirus (isolate Webb)</name>
    <name type="common">MdBV</name>
    <dbReference type="NCBI Taxonomy" id="654919"/>
    <lineage>
        <taxon>Viruses</taxon>
        <taxon>Viruses incertae sedis</taxon>
        <taxon>Polydnaviriformidae</taxon>
        <taxon>Bracoviriform</taxon>
        <taxon>Microplitis demolitor bracovirus</taxon>
    </lineage>
</organism>
<proteinExistence type="inferred from homology"/>
<accession>Q5I129</accession>
<dbReference type="EMBL" id="AY875689">
    <property type="protein sequence ID" value="AAW51804.1"/>
    <property type="molecule type" value="Genomic_DNA"/>
</dbReference>
<dbReference type="RefSeq" id="YP_239399.1">
    <property type="nucleotide sequence ID" value="NC_007039.1"/>
</dbReference>
<dbReference type="SMR" id="Q5I129"/>
<dbReference type="KEGG" id="vg:5075835"/>
<dbReference type="Proteomes" id="UP000008168">
    <property type="component" value="Genome"/>
</dbReference>
<dbReference type="GO" id="GO:0051059">
    <property type="term" value="F:NF-kappaB binding"/>
    <property type="evidence" value="ECO:0007669"/>
    <property type="project" value="TreeGrafter"/>
</dbReference>
<dbReference type="GO" id="GO:0071356">
    <property type="term" value="P:cellular response to tumor necrosis factor"/>
    <property type="evidence" value="ECO:0007669"/>
    <property type="project" value="TreeGrafter"/>
</dbReference>
<dbReference type="GO" id="GO:0085034">
    <property type="term" value="P:symbiont-mediated suppression of host NF-kappaB cascade"/>
    <property type="evidence" value="ECO:0007669"/>
    <property type="project" value="UniProtKB-KW"/>
</dbReference>
<dbReference type="GO" id="GO:0034142">
    <property type="term" value="P:toll-like receptor 4 signaling pathway"/>
    <property type="evidence" value="ECO:0007669"/>
    <property type="project" value="TreeGrafter"/>
</dbReference>
<dbReference type="Gene3D" id="1.25.40.20">
    <property type="entry name" value="Ankyrin repeat-containing domain"/>
    <property type="match status" value="1"/>
</dbReference>
<dbReference type="InterPro" id="IPR002110">
    <property type="entry name" value="Ankyrin_rpt"/>
</dbReference>
<dbReference type="InterPro" id="IPR036770">
    <property type="entry name" value="Ankyrin_rpt-contain_sf"/>
</dbReference>
<dbReference type="InterPro" id="IPR051070">
    <property type="entry name" value="NF-kappa-B_inhibitor"/>
</dbReference>
<dbReference type="PANTHER" id="PTHR46680">
    <property type="entry name" value="NF-KAPPA-B INHIBITOR ALPHA"/>
    <property type="match status" value="1"/>
</dbReference>
<dbReference type="PANTHER" id="PTHR46680:SF1">
    <property type="entry name" value="NF-KAPPA-B INHIBITOR ALPHA"/>
    <property type="match status" value="1"/>
</dbReference>
<dbReference type="Pfam" id="PF12796">
    <property type="entry name" value="Ank_2"/>
    <property type="match status" value="1"/>
</dbReference>
<dbReference type="SMART" id="SM00248">
    <property type="entry name" value="ANK"/>
    <property type="match status" value="3"/>
</dbReference>
<dbReference type="SUPFAM" id="SSF48403">
    <property type="entry name" value="Ankyrin repeat"/>
    <property type="match status" value="1"/>
</dbReference>
<dbReference type="PROSITE" id="PS50297">
    <property type="entry name" value="ANK_REP_REGION"/>
    <property type="match status" value="1"/>
</dbReference>
<organismHost>
    <name type="scientific">Microplitis demolitor</name>
    <name type="common">Parasitoid wasp</name>
    <dbReference type="NCBI Taxonomy" id="69319"/>
</organismHost>
<gene>
    <name type="primary">N2</name>
</gene>
<comment type="function">
    <text evidence="1">Suppresses the host immune response through NF-kappa-B inactivation. Possesses ankyrin repeat domain required for NF-kappa-B binding but lack the regulatory regions required for dissociation from NF-kappa-B and degradation. Therefore, prevents host NF-kappa-B release and subsequent activation (By similarity).</text>
</comment>
<comment type="similarity">
    <text evidence="2">Belongs to the polydnaviridae I-Kappa-B-like protein family.</text>
</comment>
<name>IKBN1_MDBVW</name>
<keyword id="KW-0040">ANK repeat</keyword>
<keyword id="KW-0945">Host-virus interaction</keyword>
<keyword id="KW-1100">Inhibition of host NF-kappa-B by virus</keyword>
<keyword id="KW-1185">Reference proteome</keyword>
<keyword id="KW-0677">Repeat</keyword>
<protein>
    <recommendedName>
        <fullName>I-Kappa-B like protein N1</fullName>
    </recommendedName>
</protein>
<sequence length="139" mass="15850">MEFSVRTIINNKVYINGENLLHAMCRHGNSLALSIIAQSINKNYQYLLNEYNREGRKCIHIAAVMHKGQVATELIIILLNFGADVNGRVLCTGDTVLHIAVYLKDYYLAEWLCRRSGININARNICRTHTISNSTEEKR</sequence>
<evidence type="ECO:0000250" key="1"/>
<evidence type="ECO:0000305" key="2"/>